<keyword id="KW-0028">Amino-acid biosynthesis</keyword>
<keyword id="KW-0963">Cytoplasm</keyword>
<keyword id="KW-0220">Diaminopimelate biosynthesis</keyword>
<keyword id="KW-0457">Lysine biosynthesis</keyword>
<keyword id="KW-0520">NAD</keyword>
<keyword id="KW-0521">NADP</keyword>
<keyword id="KW-0560">Oxidoreductase</keyword>
<keyword id="KW-1185">Reference proteome</keyword>
<gene>
    <name evidence="1" type="primary">dapB</name>
    <name type="ordered locus">MRA_2798</name>
</gene>
<dbReference type="EC" id="1.17.1.8" evidence="1"/>
<dbReference type="EMBL" id="CP000611">
    <property type="protein sequence ID" value="ABQ74576.1"/>
    <property type="molecule type" value="Genomic_DNA"/>
</dbReference>
<dbReference type="RefSeq" id="WP_003414099.1">
    <property type="nucleotide sequence ID" value="NZ_CP016972.1"/>
</dbReference>
<dbReference type="SMR" id="A5U6C6"/>
<dbReference type="GeneID" id="45426762"/>
<dbReference type="KEGG" id="mra:MRA_2798"/>
<dbReference type="eggNOG" id="COG0289">
    <property type="taxonomic scope" value="Bacteria"/>
</dbReference>
<dbReference type="HOGENOM" id="CLU_047479_0_1_11"/>
<dbReference type="UniPathway" id="UPA00034">
    <property type="reaction ID" value="UER00018"/>
</dbReference>
<dbReference type="Proteomes" id="UP000001988">
    <property type="component" value="Chromosome"/>
</dbReference>
<dbReference type="GO" id="GO:0005829">
    <property type="term" value="C:cytosol"/>
    <property type="evidence" value="ECO:0007669"/>
    <property type="project" value="TreeGrafter"/>
</dbReference>
<dbReference type="GO" id="GO:0008839">
    <property type="term" value="F:4-hydroxy-tetrahydrodipicolinate reductase"/>
    <property type="evidence" value="ECO:0007669"/>
    <property type="project" value="UniProtKB-EC"/>
</dbReference>
<dbReference type="GO" id="GO:0051287">
    <property type="term" value="F:NAD binding"/>
    <property type="evidence" value="ECO:0007669"/>
    <property type="project" value="UniProtKB-UniRule"/>
</dbReference>
<dbReference type="GO" id="GO:0050661">
    <property type="term" value="F:NADP binding"/>
    <property type="evidence" value="ECO:0007669"/>
    <property type="project" value="UniProtKB-UniRule"/>
</dbReference>
<dbReference type="GO" id="GO:0016726">
    <property type="term" value="F:oxidoreductase activity, acting on CH or CH2 groups, NAD or NADP as acceptor"/>
    <property type="evidence" value="ECO:0007669"/>
    <property type="project" value="UniProtKB-UniRule"/>
</dbReference>
<dbReference type="GO" id="GO:0019877">
    <property type="term" value="P:diaminopimelate biosynthetic process"/>
    <property type="evidence" value="ECO:0007669"/>
    <property type="project" value="UniProtKB-UniRule"/>
</dbReference>
<dbReference type="GO" id="GO:0009089">
    <property type="term" value="P:lysine biosynthetic process via diaminopimelate"/>
    <property type="evidence" value="ECO:0007669"/>
    <property type="project" value="UniProtKB-UniRule"/>
</dbReference>
<dbReference type="CDD" id="cd02274">
    <property type="entry name" value="DHDPR_N"/>
    <property type="match status" value="1"/>
</dbReference>
<dbReference type="FunFam" id="3.30.360.10:FF:000009">
    <property type="entry name" value="4-hydroxy-tetrahydrodipicolinate reductase"/>
    <property type="match status" value="1"/>
</dbReference>
<dbReference type="Gene3D" id="3.30.360.10">
    <property type="entry name" value="Dihydrodipicolinate Reductase, domain 2"/>
    <property type="match status" value="1"/>
</dbReference>
<dbReference type="Gene3D" id="3.40.50.720">
    <property type="entry name" value="NAD(P)-binding Rossmann-like Domain"/>
    <property type="match status" value="1"/>
</dbReference>
<dbReference type="HAMAP" id="MF_00102">
    <property type="entry name" value="DapB"/>
    <property type="match status" value="1"/>
</dbReference>
<dbReference type="InterPro" id="IPR022663">
    <property type="entry name" value="DapB_C"/>
</dbReference>
<dbReference type="InterPro" id="IPR000846">
    <property type="entry name" value="DapB_N"/>
</dbReference>
<dbReference type="InterPro" id="IPR022664">
    <property type="entry name" value="DapB_N_CS"/>
</dbReference>
<dbReference type="InterPro" id="IPR023940">
    <property type="entry name" value="DHDPR_bac"/>
</dbReference>
<dbReference type="InterPro" id="IPR036291">
    <property type="entry name" value="NAD(P)-bd_dom_sf"/>
</dbReference>
<dbReference type="NCBIfam" id="TIGR00036">
    <property type="entry name" value="dapB"/>
    <property type="match status" value="1"/>
</dbReference>
<dbReference type="PANTHER" id="PTHR20836:SF0">
    <property type="entry name" value="4-HYDROXY-TETRAHYDRODIPICOLINATE REDUCTASE 1, CHLOROPLASTIC-RELATED"/>
    <property type="match status" value="1"/>
</dbReference>
<dbReference type="PANTHER" id="PTHR20836">
    <property type="entry name" value="DIHYDRODIPICOLINATE REDUCTASE"/>
    <property type="match status" value="1"/>
</dbReference>
<dbReference type="Pfam" id="PF05173">
    <property type="entry name" value="DapB_C"/>
    <property type="match status" value="1"/>
</dbReference>
<dbReference type="Pfam" id="PF01113">
    <property type="entry name" value="DapB_N"/>
    <property type="match status" value="1"/>
</dbReference>
<dbReference type="PIRSF" id="PIRSF000161">
    <property type="entry name" value="DHPR"/>
    <property type="match status" value="1"/>
</dbReference>
<dbReference type="SUPFAM" id="SSF55347">
    <property type="entry name" value="Glyceraldehyde-3-phosphate dehydrogenase-like, C-terminal domain"/>
    <property type="match status" value="1"/>
</dbReference>
<dbReference type="SUPFAM" id="SSF51735">
    <property type="entry name" value="NAD(P)-binding Rossmann-fold domains"/>
    <property type="match status" value="1"/>
</dbReference>
<dbReference type="PROSITE" id="PS01298">
    <property type="entry name" value="DAPB"/>
    <property type="match status" value="1"/>
</dbReference>
<evidence type="ECO:0000255" key="1">
    <source>
        <dbReference type="HAMAP-Rule" id="MF_00102"/>
    </source>
</evidence>
<evidence type="ECO:0000305" key="2"/>
<accession>A5U6C6</accession>
<reference key="1">
    <citation type="journal article" date="2008" name="PLoS ONE">
        <title>Genetic basis of virulence attenuation revealed by comparative genomic analysis of Mycobacterium tuberculosis strain H37Ra versus H37Rv.</title>
        <authorList>
            <person name="Zheng H."/>
            <person name="Lu L."/>
            <person name="Wang B."/>
            <person name="Pu S."/>
            <person name="Zhang X."/>
            <person name="Zhu G."/>
            <person name="Shi W."/>
            <person name="Zhang L."/>
            <person name="Wang H."/>
            <person name="Wang S."/>
            <person name="Zhao G."/>
            <person name="Zhang Y."/>
        </authorList>
    </citation>
    <scope>NUCLEOTIDE SEQUENCE [LARGE SCALE GENOMIC DNA]</scope>
    <source>
        <strain>ATCC 25177 / H37Ra</strain>
    </source>
</reference>
<comment type="function">
    <text evidence="1">Catalyzes the conversion of 4-hydroxy-tetrahydrodipicolinate (HTPA) to tetrahydrodipicolinate.</text>
</comment>
<comment type="catalytic activity">
    <reaction evidence="1">
        <text>(S)-2,3,4,5-tetrahydrodipicolinate + NAD(+) + H2O = (2S,4S)-4-hydroxy-2,3,4,5-tetrahydrodipicolinate + NADH + H(+)</text>
        <dbReference type="Rhea" id="RHEA:35323"/>
        <dbReference type="ChEBI" id="CHEBI:15377"/>
        <dbReference type="ChEBI" id="CHEBI:15378"/>
        <dbReference type="ChEBI" id="CHEBI:16845"/>
        <dbReference type="ChEBI" id="CHEBI:57540"/>
        <dbReference type="ChEBI" id="CHEBI:57945"/>
        <dbReference type="ChEBI" id="CHEBI:67139"/>
        <dbReference type="EC" id="1.17.1.8"/>
    </reaction>
</comment>
<comment type="catalytic activity">
    <reaction evidence="1">
        <text>(S)-2,3,4,5-tetrahydrodipicolinate + NADP(+) + H2O = (2S,4S)-4-hydroxy-2,3,4,5-tetrahydrodipicolinate + NADPH + H(+)</text>
        <dbReference type="Rhea" id="RHEA:35331"/>
        <dbReference type="ChEBI" id="CHEBI:15377"/>
        <dbReference type="ChEBI" id="CHEBI:15378"/>
        <dbReference type="ChEBI" id="CHEBI:16845"/>
        <dbReference type="ChEBI" id="CHEBI:57783"/>
        <dbReference type="ChEBI" id="CHEBI:58349"/>
        <dbReference type="ChEBI" id="CHEBI:67139"/>
        <dbReference type="EC" id="1.17.1.8"/>
    </reaction>
</comment>
<comment type="pathway">
    <text evidence="1">Amino-acid biosynthesis; L-lysine biosynthesis via DAP pathway; (S)-tetrahydrodipicolinate from L-aspartate: step 4/4.</text>
</comment>
<comment type="subcellular location">
    <subcellularLocation>
        <location evidence="1">Cytoplasm</location>
    </subcellularLocation>
</comment>
<comment type="similarity">
    <text evidence="1">Belongs to the DapB family.</text>
</comment>
<comment type="caution">
    <text evidence="2">Was originally thought to be a dihydrodipicolinate reductase (DHDPR), catalyzing the conversion of dihydrodipicolinate to tetrahydrodipicolinate. However, it was shown in E.coli that the substrate of the enzymatic reaction is not dihydrodipicolinate (DHDP) but in fact (2S,4S)-4-hydroxy-2,3,4,5-tetrahydrodipicolinic acid (HTPA), the product released by the DapA-catalyzed reaction.</text>
</comment>
<organism>
    <name type="scientific">Mycobacterium tuberculosis (strain ATCC 25177 / H37Ra)</name>
    <dbReference type="NCBI Taxonomy" id="419947"/>
    <lineage>
        <taxon>Bacteria</taxon>
        <taxon>Bacillati</taxon>
        <taxon>Actinomycetota</taxon>
        <taxon>Actinomycetes</taxon>
        <taxon>Mycobacteriales</taxon>
        <taxon>Mycobacteriaceae</taxon>
        <taxon>Mycobacterium</taxon>
        <taxon>Mycobacterium tuberculosis complex</taxon>
    </lineage>
</organism>
<proteinExistence type="inferred from homology"/>
<sequence>MRVGVLGAKGKVGATMVRAVAAADDLTLSAELDAGDPLSLLTDGNTEVVIDFTHPDVVMGNLEFLIDNGIHAVVGTTGFTAERFQQVESWLVAKPNTSVLIAPNFAIGAVLSMHFAKQAARFFDSAEVIELHHPHKADAPSGTAARTAKLIAEARKGLPPNPDATSTSLPGARGADVDGIPVHAVRLAGLVAHQEVLFGTEGETLTIRHDSLDRTSFVPGVLLAVRRIAERPGLTVGLEPLLDLH</sequence>
<feature type="chain" id="PRO_1000008601" description="4-hydroxy-tetrahydrodipicolinate reductase">
    <location>
        <begin position="1"/>
        <end position="245"/>
    </location>
</feature>
<feature type="active site" description="Proton donor/acceptor" evidence="1">
    <location>
        <position position="132"/>
    </location>
</feature>
<feature type="active site" description="Proton donor" evidence="1">
    <location>
        <position position="136"/>
    </location>
</feature>
<feature type="binding site" evidence="1">
    <location>
        <begin position="7"/>
        <end position="12"/>
    </location>
    <ligand>
        <name>NAD(+)</name>
        <dbReference type="ChEBI" id="CHEBI:57540"/>
    </ligand>
</feature>
<feature type="binding site" evidence="1">
    <location>
        <begin position="75"/>
        <end position="77"/>
    </location>
    <ligand>
        <name>NAD(+)</name>
        <dbReference type="ChEBI" id="CHEBI:57540"/>
    </ligand>
</feature>
<feature type="binding site" evidence="1">
    <location>
        <begin position="102"/>
        <end position="105"/>
    </location>
    <ligand>
        <name>NAD(+)</name>
        <dbReference type="ChEBI" id="CHEBI:57540"/>
    </ligand>
</feature>
<feature type="binding site" evidence="1">
    <location>
        <position position="133"/>
    </location>
    <ligand>
        <name>(S)-2,3,4,5-tetrahydrodipicolinate</name>
        <dbReference type="ChEBI" id="CHEBI:16845"/>
    </ligand>
</feature>
<feature type="binding site" evidence="1">
    <location>
        <begin position="142"/>
        <end position="143"/>
    </location>
    <ligand>
        <name>(S)-2,3,4,5-tetrahydrodipicolinate</name>
        <dbReference type="ChEBI" id="CHEBI:16845"/>
    </ligand>
</feature>
<name>DAPB_MYCTA</name>
<protein>
    <recommendedName>
        <fullName evidence="1">4-hydroxy-tetrahydrodipicolinate reductase</fullName>
        <shortName evidence="1">HTPA reductase</shortName>
        <ecNumber evidence="1">1.17.1.8</ecNumber>
    </recommendedName>
</protein>